<proteinExistence type="inferred from homology"/>
<keyword id="KW-0028">Amino-acid biosynthesis</keyword>
<keyword id="KW-0963">Cytoplasm</keyword>
<keyword id="KW-0554">One-carbon metabolism</keyword>
<keyword id="KW-0663">Pyridoxal phosphate</keyword>
<keyword id="KW-0808">Transferase</keyword>
<gene>
    <name evidence="1" type="primary">glyA</name>
    <name type="ordered locus">Bpet0614</name>
</gene>
<reference key="1">
    <citation type="journal article" date="2008" name="BMC Genomics">
        <title>The missing link: Bordetella petrii is endowed with both the metabolic versatility of environmental bacteria and virulence traits of pathogenic Bordetellae.</title>
        <authorList>
            <person name="Gross R."/>
            <person name="Guzman C.A."/>
            <person name="Sebaihia M."/>
            <person name="Martin dos Santos V.A.P."/>
            <person name="Pieper D.H."/>
            <person name="Koebnik R."/>
            <person name="Lechner M."/>
            <person name="Bartels D."/>
            <person name="Buhrmester J."/>
            <person name="Choudhuri J.V."/>
            <person name="Ebensen T."/>
            <person name="Gaigalat L."/>
            <person name="Herrmann S."/>
            <person name="Khachane A.N."/>
            <person name="Larisch C."/>
            <person name="Link S."/>
            <person name="Linke B."/>
            <person name="Meyer F."/>
            <person name="Mormann S."/>
            <person name="Nakunst D."/>
            <person name="Rueckert C."/>
            <person name="Schneiker-Bekel S."/>
            <person name="Schulze K."/>
            <person name="Voerholter F.-J."/>
            <person name="Yevsa T."/>
            <person name="Engle J.T."/>
            <person name="Goldman W.E."/>
            <person name="Puehler A."/>
            <person name="Goebel U.B."/>
            <person name="Goesmann A."/>
            <person name="Bloecker H."/>
            <person name="Kaiser O."/>
            <person name="Martinez-Arias R."/>
        </authorList>
    </citation>
    <scope>NUCLEOTIDE SEQUENCE [LARGE SCALE GENOMIC DNA]</scope>
    <source>
        <strain>ATCC BAA-461 / DSM 12804 / CCUG 43448</strain>
    </source>
</reference>
<dbReference type="EC" id="2.1.2.1" evidence="1"/>
<dbReference type="EMBL" id="AM902716">
    <property type="protein sequence ID" value="CAP40946.1"/>
    <property type="molecule type" value="Genomic_DNA"/>
</dbReference>
<dbReference type="SMR" id="A9I292"/>
<dbReference type="STRING" id="94624.Bpet0614"/>
<dbReference type="KEGG" id="bpt:Bpet0614"/>
<dbReference type="eggNOG" id="COG0112">
    <property type="taxonomic scope" value="Bacteria"/>
</dbReference>
<dbReference type="UniPathway" id="UPA00193"/>
<dbReference type="UniPathway" id="UPA00288">
    <property type="reaction ID" value="UER01023"/>
</dbReference>
<dbReference type="Proteomes" id="UP000001225">
    <property type="component" value="Chromosome"/>
</dbReference>
<dbReference type="GO" id="GO:0005829">
    <property type="term" value="C:cytosol"/>
    <property type="evidence" value="ECO:0007669"/>
    <property type="project" value="TreeGrafter"/>
</dbReference>
<dbReference type="GO" id="GO:0004372">
    <property type="term" value="F:glycine hydroxymethyltransferase activity"/>
    <property type="evidence" value="ECO:0007669"/>
    <property type="project" value="UniProtKB-UniRule"/>
</dbReference>
<dbReference type="GO" id="GO:0030170">
    <property type="term" value="F:pyridoxal phosphate binding"/>
    <property type="evidence" value="ECO:0007669"/>
    <property type="project" value="UniProtKB-UniRule"/>
</dbReference>
<dbReference type="GO" id="GO:0019264">
    <property type="term" value="P:glycine biosynthetic process from serine"/>
    <property type="evidence" value="ECO:0007669"/>
    <property type="project" value="UniProtKB-UniRule"/>
</dbReference>
<dbReference type="GO" id="GO:0035999">
    <property type="term" value="P:tetrahydrofolate interconversion"/>
    <property type="evidence" value="ECO:0007669"/>
    <property type="project" value="UniProtKB-UniRule"/>
</dbReference>
<dbReference type="CDD" id="cd00378">
    <property type="entry name" value="SHMT"/>
    <property type="match status" value="1"/>
</dbReference>
<dbReference type="FunFam" id="3.40.640.10:FF:000001">
    <property type="entry name" value="Serine hydroxymethyltransferase"/>
    <property type="match status" value="1"/>
</dbReference>
<dbReference type="FunFam" id="3.90.1150.10:FF:000003">
    <property type="entry name" value="Serine hydroxymethyltransferase"/>
    <property type="match status" value="1"/>
</dbReference>
<dbReference type="Gene3D" id="3.90.1150.10">
    <property type="entry name" value="Aspartate Aminotransferase, domain 1"/>
    <property type="match status" value="1"/>
</dbReference>
<dbReference type="Gene3D" id="3.40.640.10">
    <property type="entry name" value="Type I PLP-dependent aspartate aminotransferase-like (Major domain)"/>
    <property type="match status" value="1"/>
</dbReference>
<dbReference type="HAMAP" id="MF_00051">
    <property type="entry name" value="SHMT"/>
    <property type="match status" value="1"/>
</dbReference>
<dbReference type="InterPro" id="IPR015424">
    <property type="entry name" value="PyrdxlP-dep_Trfase"/>
</dbReference>
<dbReference type="InterPro" id="IPR015421">
    <property type="entry name" value="PyrdxlP-dep_Trfase_major"/>
</dbReference>
<dbReference type="InterPro" id="IPR015422">
    <property type="entry name" value="PyrdxlP-dep_Trfase_small"/>
</dbReference>
<dbReference type="InterPro" id="IPR001085">
    <property type="entry name" value="Ser_HO-MeTrfase"/>
</dbReference>
<dbReference type="InterPro" id="IPR049943">
    <property type="entry name" value="Ser_HO-MeTrfase-like"/>
</dbReference>
<dbReference type="InterPro" id="IPR019798">
    <property type="entry name" value="Ser_HO-MeTrfase_PLP_BS"/>
</dbReference>
<dbReference type="InterPro" id="IPR039429">
    <property type="entry name" value="SHMT-like_dom"/>
</dbReference>
<dbReference type="NCBIfam" id="NF000586">
    <property type="entry name" value="PRK00011.1"/>
    <property type="match status" value="1"/>
</dbReference>
<dbReference type="PANTHER" id="PTHR11680">
    <property type="entry name" value="SERINE HYDROXYMETHYLTRANSFERASE"/>
    <property type="match status" value="1"/>
</dbReference>
<dbReference type="PANTHER" id="PTHR11680:SF50">
    <property type="entry name" value="SERINE HYDROXYMETHYLTRANSFERASE"/>
    <property type="match status" value="1"/>
</dbReference>
<dbReference type="Pfam" id="PF00464">
    <property type="entry name" value="SHMT"/>
    <property type="match status" value="1"/>
</dbReference>
<dbReference type="PIRSF" id="PIRSF000412">
    <property type="entry name" value="SHMT"/>
    <property type="match status" value="1"/>
</dbReference>
<dbReference type="SUPFAM" id="SSF53383">
    <property type="entry name" value="PLP-dependent transferases"/>
    <property type="match status" value="1"/>
</dbReference>
<dbReference type="PROSITE" id="PS00096">
    <property type="entry name" value="SHMT"/>
    <property type="match status" value="1"/>
</dbReference>
<accession>A9I292</accession>
<sequence>MFDRKLTLSQVDPEVWAAIQKEDVRQEQHIELIASENYASPAVMQAQGTQLTNKYAEGYPGKRYYGGCEYVDVVEQLAIDRLKQLFGAEAANVQPNSGSQANQGVYMAVLKPGDTVLGMSLAEGGHLTHGASVNASGKLYNFISYGLDANEVLDYAQVEQLAKEHKPKLIVAGASAYALHIDFERLARIAHDNGALLMVDIAHYAGLVAGGAYPNPVPHADFVTSTTHKSLRGPRGGVIMMKAEYEKIINSAIFPGIQGGPLMHVIAAKAVAFQEALSPEFKQYAQQVAKNAKVLAETLVKRGLRIVSGRTESHVMLVDLRPKGITGKEAEAVLGQAHITVNKNAIPNDPEKPFVTSGIRLGTPAMTTRGFKEAEAELTANLIADVLDNPRDEANIAAVRARVNELTARLPVYGG</sequence>
<protein>
    <recommendedName>
        <fullName evidence="1">Serine hydroxymethyltransferase</fullName>
        <shortName evidence="1">SHMT</shortName>
        <shortName evidence="1">Serine methylase</shortName>
        <ecNumber evidence="1">2.1.2.1</ecNumber>
    </recommendedName>
</protein>
<comment type="function">
    <text evidence="1">Catalyzes the reversible interconversion of serine and glycine with tetrahydrofolate (THF) serving as the one-carbon carrier. This reaction serves as the major source of one-carbon groups required for the biosynthesis of purines, thymidylate, methionine, and other important biomolecules. Also exhibits THF-independent aldolase activity toward beta-hydroxyamino acids, producing glycine and aldehydes, via a retro-aldol mechanism.</text>
</comment>
<comment type="catalytic activity">
    <reaction evidence="1">
        <text>(6R)-5,10-methylene-5,6,7,8-tetrahydrofolate + glycine + H2O = (6S)-5,6,7,8-tetrahydrofolate + L-serine</text>
        <dbReference type="Rhea" id="RHEA:15481"/>
        <dbReference type="ChEBI" id="CHEBI:15377"/>
        <dbReference type="ChEBI" id="CHEBI:15636"/>
        <dbReference type="ChEBI" id="CHEBI:33384"/>
        <dbReference type="ChEBI" id="CHEBI:57305"/>
        <dbReference type="ChEBI" id="CHEBI:57453"/>
        <dbReference type="EC" id="2.1.2.1"/>
    </reaction>
</comment>
<comment type="cofactor">
    <cofactor evidence="1">
        <name>pyridoxal 5'-phosphate</name>
        <dbReference type="ChEBI" id="CHEBI:597326"/>
    </cofactor>
</comment>
<comment type="pathway">
    <text evidence="1">One-carbon metabolism; tetrahydrofolate interconversion.</text>
</comment>
<comment type="pathway">
    <text evidence="1">Amino-acid biosynthesis; glycine biosynthesis; glycine from L-serine: step 1/1.</text>
</comment>
<comment type="subunit">
    <text evidence="1">Homodimer.</text>
</comment>
<comment type="subcellular location">
    <subcellularLocation>
        <location evidence="1">Cytoplasm</location>
    </subcellularLocation>
</comment>
<comment type="similarity">
    <text evidence="1">Belongs to the SHMT family.</text>
</comment>
<evidence type="ECO:0000255" key="1">
    <source>
        <dbReference type="HAMAP-Rule" id="MF_00051"/>
    </source>
</evidence>
<feature type="chain" id="PRO_1000091521" description="Serine hydroxymethyltransferase">
    <location>
        <begin position="1"/>
        <end position="415"/>
    </location>
</feature>
<feature type="binding site" evidence="1">
    <location>
        <position position="121"/>
    </location>
    <ligand>
        <name>(6S)-5,6,7,8-tetrahydrofolate</name>
        <dbReference type="ChEBI" id="CHEBI:57453"/>
    </ligand>
</feature>
<feature type="binding site" evidence="1">
    <location>
        <begin position="125"/>
        <end position="127"/>
    </location>
    <ligand>
        <name>(6S)-5,6,7,8-tetrahydrofolate</name>
        <dbReference type="ChEBI" id="CHEBI:57453"/>
    </ligand>
</feature>
<feature type="site" description="Plays an important role in substrate specificity" evidence="1">
    <location>
        <position position="228"/>
    </location>
</feature>
<feature type="modified residue" description="N6-(pyridoxal phosphate)lysine" evidence="1">
    <location>
        <position position="229"/>
    </location>
</feature>
<name>GLYA_BORPD</name>
<organism>
    <name type="scientific">Bordetella petrii (strain ATCC BAA-461 / DSM 12804 / CCUG 43448)</name>
    <dbReference type="NCBI Taxonomy" id="340100"/>
    <lineage>
        <taxon>Bacteria</taxon>
        <taxon>Pseudomonadati</taxon>
        <taxon>Pseudomonadota</taxon>
        <taxon>Betaproteobacteria</taxon>
        <taxon>Burkholderiales</taxon>
        <taxon>Alcaligenaceae</taxon>
        <taxon>Bordetella</taxon>
    </lineage>
</organism>